<sequence length="247" mass="27723">MWILKSGFNRCRNFSFMNRGLLGLRNLSVTHNNLVSYLEHLSVQKPSTSNTVAQGTLFEYLVQYVLKQHSFQLERCGGKGDGGVDLVGQFSIKNVLFEPTKVVVSCKSNKGSIGPRFVRELEGSLSSYPTDTLGILACLGSFTSSSLKTLSISNRPLALCRIYVDGFHSYMFQFVWNHQALAIFPDLSVRQIYKLPSPTANIVPLSQEFSQVNYVSLFELLQPLSRTEERPVPLVLVYKNQKISLNC</sequence>
<comment type="subcellular location">
    <subcellularLocation>
        <location evidence="1">Mitochondrion</location>
    </subcellularLocation>
</comment>
<keyword id="KW-0496">Mitochondrion</keyword>
<keyword id="KW-1185">Reference proteome</keyword>
<organism>
    <name type="scientific">Schizosaccharomyces pombe (strain 972 / ATCC 24843)</name>
    <name type="common">Fission yeast</name>
    <dbReference type="NCBI Taxonomy" id="284812"/>
    <lineage>
        <taxon>Eukaryota</taxon>
        <taxon>Fungi</taxon>
        <taxon>Dikarya</taxon>
        <taxon>Ascomycota</taxon>
        <taxon>Taphrinomycotina</taxon>
        <taxon>Schizosaccharomycetes</taxon>
        <taxon>Schizosaccharomycetales</taxon>
        <taxon>Schizosaccharomycetaceae</taxon>
        <taxon>Schizosaccharomyces</taxon>
    </lineage>
</organism>
<protein>
    <recommendedName>
        <fullName>Uncharacterized protein C824.03c, mitochondrial</fullName>
    </recommendedName>
</protein>
<reference key="1">
    <citation type="journal article" date="2002" name="Nature">
        <title>The genome sequence of Schizosaccharomyces pombe.</title>
        <authorList>
            <person name="Wood V."/>
            <person name="Gwilliam R."/>
            <person name="Rajandream M.A."/>
            <person name="Lyne M.H."/>
            <person name="Lyne R."/>
            <person name="Stewart A."/>
            <person name="Sgouros J.G."/>
            <person name="Peat N."/>
            <person name="Hayles J."/>
            <person name="Baker S.G."/>
            <person name="Basham D."/>
            <person name="Bowman S."/>
            <person name="Brooks K."/>
            <person name="Brown D."/>
            <person name="Brown S."/>
            <person name="Chillingworth T."/>
            <person name="Churcher C.M."/>
            <person name="Collins M."/>
            <person name="Connor R."/>
            <person name="Cronin A."/>
            <person name="Davis P."/>
            <person name="Feltwell T."/>
            <person name="Fraser A."/>
            <person name="Gentles S."/>
            <person name="Goble A."/>
            <person name="Hamlin N."/>
            <person name="Harris D.E."/>
            <person name="Hidalgo J."/>
            <person name="Hodgson G."/>
            <person name="Holroyd S."/>
            <person name="Hornsby T."/>
            <person name="Howarth S."/>
            <person name="Huckle E.J."/>
            <person name="Hunt S."/>
            <person name="Jagels K."/>
            <person name="James K.D."/>
            <person name="Jones L."/>
            <person name="Jones M."/>
            <person name="Leather S."/>
            <person name="McDonald S."/>
            <person name="McLean J."/>
            <person name="Mooney P."/>
            <person name="Moule S."/>
            <person name="Mungall K.L."/>
            <person name="Murphy L.D."/>
            <person name="Niblett D."/>
            <person name="Odell C."/>
            <person name="Oliver K."/>
            <person name="O'Neil S."/>
            <person name="Pearson D."/>
            <person name="Quail M.A."/>
            <person name="Rabbinowitsch E."/>
            <person name="Rutherford K.M."/>
            <person name="Rutter S."/>
            <person name="Saunders D."/>
            <person name="Seeger K."/>
            <person name="Sharp S."/>
            <person name="Skelton J."/>
            <person name="Simmonds M.N."/>
            <person name="Squares R."/>
            <person name="Squares S."/>
            <person name="Stevens K."/>
            <person name="Taylor K."/>
            <person name="Taylor R.G."/>
            <person name="Tivey A."/>
            <person name="Walsh S.V."/>
            <person name="Warren T."/>
            <person name="Whitehead S."/>
            <person name="Woodward J.R."/>
            <person name="Volckaert G."/>
            <person name="Aert R."/>
            <person name="Robben J."/>
            <person name="Grymonprez B."/>
            <person name="Weltjens I."/>
            <person name="Vanstreels E."/>
            <person name="Rieger M."/>
            <person name="Schaefer M."/>
            <person name="Mueller-Auer S."/>
            <person name="Gabel C."/>
            <person name="Fuchs M."/>
            <person name="Duesterhoeft A."/>
            <person name="Fritzc C."/>
            <person name="Holzer E."/>
            <person name="Moestl D."/>
            <person name="Hilbert H."/>
            <person name="Borzym K."/>
            <person name="Langer I."/>
            <person name="Beck A."/>
            <person name="Lehrach H."/>
            <person name="Reinhardt R."/>
            <person name="Pohl T.M."/>
            <person name="Eger P."/>
            <person name="Zimmermann W."/>
            <person name="Wedler H."/>
            <person name="Wambutt R."/>
            <person name="Purnelle B."/>
            <person name="Goffeau A."/>
            <person name="Cadieu E."/>
            <person name="Dreano S."/>
            <person name="Gloux S."/>
            <person name="Lelaure V."/>
            <person name="Mottier S."/>
            <person name="Galibert F."/>
            <person name="Aves S.J."/>
            <person name="Xiang Z."/>
            <person name="Hunt C."/>
            <person name="Moore K."/>
            <person name="Hurst S.M."/>
            <person name="Lucas M."/>
            <person name="Rochet M."/>
            <person name="Gaillardin C."/>
            <person name="Tallada V.A."/>
            <person name="Garzon A."/>
            <person name="Thode G."/>
            <person name="Daga R.R."/>
            <person name="Cruzado L."/>
            <person name="Jimenez J."/>
            <person name="Sanchez M."/>
            <person name="del Rey F."/>
            <person name="Benito J."/>
            <person name="Dominguez A."/>
            <person name="Revuelta J.L."/>
            <person name="Moreno S."/>
            <person name="Armstrong J."/>
            <person name="Forsburg S.L."/>
            <person name="Cerutti L."/>
            <person name="Lowe T."/>
            <person name="McCombie W.R."/>
            <person name="Paulsen I."/>
            <person name="Potashkin J."/>
            <person name="Shpakovski G.V."/>
            <person name="Ussery D."/>
            <person name="Barrell B.G."/>
            <person name="Nurse P."/>
        </authorList>
    </citation>
    <scope>NUCLEOTIDE SEQUENCE [LARGE SCALE GENOMIC DNA]</scope>
    <source>
        <strain>972 / ATCC 24843</strain>
    </source>
</reference>
<reference key="2">
    <citation type="journal article" date="2006" name="Nat. Biotechnol.">
        <title>ORFeome cloning and global analysis of protein localization in the fission yeast Schizosaccharomyces pombe.</title>
        <authorList>
            <person name="Matsuyama A."/>
            <person name="Arai R."/>
            <person name="Yashiroda Y."/>
            <person name="Shirai A."/>
            <person name="Kamata A."/>
            <person name="Sekido S."/>
            <person name="Kobayashi Y."/>
            <person name="Hashimoto A."/>
            <person name="Hamamoto M."/>
            <person name="Hiraoka Y."/>
            <person name="Horinouchi S."/>
            <person name="Yoshida M."/>
        </authorList>
    </citation>
    <scope>SUBCELLULAR LOCATION [LARGE SCALE ANALYSIS]</scope>
</reference>
<feature type="chain" id="PRO_0000362150" description="Uncharacterized protein C824.03c, mitochondrial">
    <location>
        <begin position="1"/>
        <end position="247"/>
    </location>
</feature>
<name>YIQ3_SCHPO</name>
<evidence type="ECO:0000269" key="1">
    <source>
    </source>
</evidence>
<accession>Q9UT40</accession>
<gene>
    <name type="ORF">SPAC824.03c</name>
</gene>
<dbReference type="EMBL" id="CU329670">
    <property type="protein sequence ID" value="CAB57333.1"/>
    <property type="molecule type" value="Genomic_DNA"/>
</dbReference>
<dbReference type="PIR" id="T39104">
    <property type="entry name" value="T39104"/>
</dbReference>
<dbReference type="RefSeq" id="NP_593442.1">
    <property type="nucleotide sequence ID" value="NM_001018875.2"/>
</dbReference>
<dbReference type="BioGRID" id="279526">
    <property type="interactions" value="1"/>
</dbReference>
<dbReference type="PaxDb" id="4896-SPAC824.03c.1"/>
<dbReference type="EnsemblFungi" id="SPAC824.03c.1">
    <property type="protein sequence ID" value="SPAC824.03c.1:pep"/>
    <property type="gene ID" value="SPAC824.03c"/>
</dbReference>
<dbReference type="KEGG" id="spo:2543094"/>
<dbReference type="PomBase" id="SPAC824.03c"/>
<dbReference type="VEuPathDB" id="FungiDB:SPAC824.03c"/>
<dbReference type="eggNOG" id="ENOG502S6ZS">
    <property type="taxonomic scope" value="Eukaryota"/>
</dbReference>
<dbReference type="HOGENOM" id="CLU_098374_0_0_1"/>
<dbReference type="InParanoid" id="Q9UT40"/>
<dbReference type="OMA" id="QGTLFEY"/>
<dbReference type="PhylomeDB" id="Q9UT40"/>
<dbReference type="PRO" id="PR:Q9UT40"/>
<dbReference type="Proteomes" id="UP000002485">
    <property type="component" value="Chromosome I"/>
</dbReference>
<dbReference type="GO" id="GO:0005739">
    <property type="term" value="C:mitochondrion"/>
    <property type="evidence" value="ECO:0007005"/>
    <property type="project" value="PomBase"/>
</dbReference>
<dbReference type="GO" id="GO:0004519">
    <property type="term" value="F:endonuclease activity"/>
    <property type="evidence" value="ECO:0000255"/>
    <property type="project" value="PomBase"/>
</dbReference>
<dbReference type="GO" id="GO:0003676">
    <property type="term" value="F:nucleic acid binding"/>
    <property type="evidence" value="ECO:0007669"/>
    <property type="project" value="InterPro"/>
</dbReference>
<dbReference type="GO" id="GO:0006302">
    <property type="term" value="P:double-strand break repair"/>
    <property type="evidence" value="ECO:0007669"/>
    <property type="project" value="UniProtKB-ARBA"/>
</dbReference>
<dbReference type="Gene3D" id="3.40.1350.10">
    <property type="match status" value="1"/>
</dbReference>
<dbReference type="InterPro" id="IPR011335">
    <property type="entry name" value="Restrct_endonuc-II-like"/>
</dbReference>
<dbReference type="InterPro" id="IPR018828">
    <property type="entry name" value="RRG7"/>
</dbReference>
<dbReference type="InterPro" id="IPR011856">
    <property type="entry name" value="tRNA_endonuc-like_dom_sf"/>
</dbReference>
<dbReference type="PANTHER" id="PTHR28133">
    <property type="entry name" value="REQUIRED FOR RESPIRATORY GROWTH PROTEIN 7, MITOCHONDRIAL"/>
    <property type="match status" value="1"/>
</dbReference>
<dbReference type="PANTHER" id="PTHR28133:SF1">
    <property type="entry name" value="REQUIRED FOR RESPIRATORY GROWTH PROTEIN 7, MITOCHONDRIAL"/>
    <property type="match status" value="1"/>
</dbReference>
<dbReference type="Pfam" id="PF10356">
    <property type="entry name" value="RRG7"/>
    <property type="match status" value="1"/>
</dbReference>
<dbReference type="SUPFAM" id="SSF52980">
    <property type="entry name" value="Restriction endonuclease-like"/>
    <property type="match status" value="1"/>
</dbReference>
<proteinExistence type="predicted"/>